<dbReference type="EC" id="2.4.2.1" evidence="2"/>
<dbReference type="EMBL" id="CP000946">
    <property type="protein sequence ID" value="ACA79283.1"/>
    <property type="molecule type" value="Genomic_DNA"/>
</dbReference>
<dbReference type="RefSeq" id="WP_000224879.1">
    <property type="nucleotide sequence ID" value="NZ_MTFT01000024.1"/>
</dbReference>
<dbReference type="SMR" id="B1IS35"/>
<dbReference type="KEGG" id="ecl:EcolC_3672"/>
<dbReference type="HOGENOM" id="CLU_068457_2_0_6"/>
<dbReference type="GO" id="GO:0005829">
    <property type="term" value="C:cytosol"/>
    <property type="evidence" value="ECO:0007669"/>
    <property type="project" value="TreeGrafter"/>
</dbReference>
<dbReference type="GO" id="GO:0004731">
    <property type="term" value="F:purine-nucleoside phosphorylase activity"/>
    <property type="evidence" value="ECO:0007669"/>
    <property type="project" value="UniProtKB-UniRule"/>
</dbReference>
<dbReference type="GO" id="GO:0006152">
    <property type="term" value="P:purine nucleoside catabolic process"/>
    <property type="evidence" value="ECO:0007669"/>
    <property type="project" value="TreeGrafter"/>
</dbReference>
<dbReference type="CDD" id="cd09006">
    <property type="entry name" value="PNP_EcPNPI-like"/>
    <property type="match status" value="1"/>
</dbReference>
<dbReference type="FunFam" id="3.40.50.1580:FF:000002">
    <property type="entry name" value="Purine nucleoside phosphorylase DeoD-type"/>
    <property type="match status" value="1"/>
</dbReference>
<dbReference type="Gene3D" id="3.40.50.1580">
    <property type="entry name" value="Nucleoside phosphorylase domain"/>
    <property type="match status" value="1"/>
</dbReference>
<dbReference type="HAMAP" id="MF_01627">
    <property type="entry name" value="Pur_nucleosid_phosp"/>
    <property type="match status" value="1"/>
</dbReference>
<dbReference type="InterPro" id="IPR004402">
    <property type="entry name" value="DeoD-type"/>
</dbReference>
<dbReference type="InterPro" id="IPR018016">
    <property type="entry name" value="Nucleoside_phosphorylase_CS"/>
</dbReference>
<dbReference type="InterPro" id="IPR000845">
    <property type="entry name" value="Nucleoside_phosphorylase_d"/>
</dbReference>
<dbReference type="InterPro" id="IPR035994">
    <property type="entry name" value="Nucleoside_phosphorylase_sf"/>
</dbReference>
<dbReference type="NCBIfam" id="TIGR00107">
    <property type="entry name" value="deoD"/>
    <property type="match status" value="1"/>
</dbReference>
<dbReference type="NCBIfam" id="NF004489">
    <property type="entry name" value="PRK05819.1"/>
    <property type="match status" value="1"/>
</dbReference>
<dbReference type="NCBIfam" id="NF009914">
    <property type="entry name" value="PRK13374.1"/>
    <property type="match status" value="1"/>
</dbReference>
<dbReference type="PANTHER" id="PTHR43691:SF2">
    <property type="entry name" value="PURINE NUCLEOSIDE PHOSPHORYLASE DEOD-TYPE"/>
    <property type="match status" value="1"/>
</dbReference>
<dbReference type="PANTHER" id="PTHR43691">
    <property type="entry name" value="URIDINE PHOSPHORYLASE"/>
    <property type="match status" value="1"/>
</dbReference>
<dbReference type="Pfam" id="PF01048">
    <property type="entry name" value="PNP_UDP_1"/>
    <property type="match status" value="1"/>
</dbReference>
<dbReference type="SUPFAM" id="SSF53167">
    <property type="entry name" value="Purine and uridine phosphorylases"/>
    <property type="match status" value="1"/>
</dbReference>
<dbReference type="PROSITE" id="PS01232">
    <property type="entry name" value="PNP_UDP_1"/>
    <property type="match status" value="1"/>
</dbReference>
<gene>
    <name evidence="2" type="primary">deoD</name>
    <name type="ordered locus">EcolC_3672</name>
</gene>
<reference key="1">
    <citation type="submission" date="2008-02" db="EMBL/GenBank/DDBJ databases">
        <title>Complete sequence of Escherichia coli C str. ATCC 8739.</title>
        <authorList>
            <person name="Copeland A."/>
            <person name="Lucas S."/>
            <person name="Lapidus A."/>
            <person name="Glavina del Rio T."/>
            <person name="Dalin E."/>
            <person name="Tice H."/>
            <person name="Bruce D."/>
            <person name="Goodwin L."/>
            <person name="Pitluck S."/>
            <person name="Kiss H."/>
            <person name="Brettin T."/>
            <person name="Detter J.C."/>
            <person name="Han C."/>
            <person name="Kuske C.R."/>
            <person name="Schmutz J."/>
            <person name="Larimer F."/>
            <person name="Land M."/>
            <person name="Hauser L."/>
            <person name="Kyrpides N."/>
            <person name="Mikhailova N."/>
            <person name="Ingram L."/>
            <person name="Richardson P."/>
        </authorList>
    </citation>
    <scope>NUCLEOTIDE SEQUENCE [LARGE SCALE GENOMIC DNA]</scope>
    <source>
        <strain>ATCC 8739 / DSM 1576 / NBRC 3972 / NCIMB 8545 / WDCM 00012 / Crooks</strain>
    </source>
</reference>
<protein>
    <recommendedName>
        <fullName evidence="2">Purine nucleoside phosphorylase DeoD-type</fullName>
        <shortName evidence="2">PNP</shortName>
        <ecNumber evidence="2">2.4.2.1</ecNumber>
    </recommendedName>
</protein>
<organism>
    <name type="scientific">Escherichia coli (strain ATCC 8739 / DSM 1576 / NBRC 3972 / NCIMB 8545 / WDCM 00012 / Crooks)</name>
    <dbReference type="NCBI Taxonomy" id="481805"/>
    <lineage>
        <taxon>Bacteria</taxon>
        <taxon>Pseudomonadati</taxon>
        <taxon>Pseudomonadota</taxon>
        <taxon>Gammaproteobacteria</taxon>
        <taxon>Enterobacterales</taxon>
        <taxon>Enterobacteriaceae</taxon>
        <taxon>Escherichia</taxon>
    </lineage>
</organism>
<evidence type="ECO:0000250" key="1">
    <source>
        <dbReference type="UniProtKB" id="P50389"/>
    </source>
</evidence>
<evidence type="ECO:0000255" key="2">
    <source>
        <dbReference type="HAMAP-Rule" id="MF_01627"/>
    </source>
</evidence>
<keyword id="KW-0007">Acetylation</keyword>
<keyword id="KW-0328">Glycosyltransferase</keyword>
<keyword id="KW-0808">Transferase</keyword>
<proteinExistence type="inferred from homology"/>
<sequence length="239" mass="25936">MATPHINAEMGDFADVVLMPGDPLRAKYIAETFLEDAREVNNVRGMLGFTGTYKGRKISVMGHGMGIPSCSIYTKELITDFGVKKIIRVGSCGAVLPHVKLRDVVIGMGACTDSKVNRIRFKDHDFAAIADFDMVRNAVDAAKALGVDARVGNLFSADLFYSPDGEMFDVMEKYGILGVEMEAAGIYGVAAEFGAKALTICTVSDHIRTHEQTTAAERQTTFNDMIKIALESVLLGDKE</sequence>
<name>DEOD_ECOLC</name>
<feature type="chain" id="PRO_1000088103" description="Purine nucleoside phosphorylase DeoD-type">
    <location>
        <begin position="1"/>
        <end position="239"/>
    </location>
</feature>
<feature type="active site" description="Proton donor" evidence="2">
    <location>
        <position position="205"/>
    </location>
</feature>
<feature type="binding site" evidence="1">
    <location>
        <position position="5"/>
    </location>
    <ligand>
        <name>a purine D-ribonucleoside</name>
        <dbReference type="ChEBI" id="CHEBI:142355"/>
        <note>ligand shared between dimeric partners</note>
    </ligand>
</feature>
<feature type="binding site" description="in other chain" evidence="1">
    <location>
        <position position="21"/>
    </location>
    <ligand>
        <name>phosphate</name>
        <dbReference type="ChEBI" id="CHEBI:43474"/>
        <note>ligand shared between dimeric partners</note>
    </ligand>
</feature>
<feature type="binding site" description="in other chain" evidence="1">
    <location>
        <position position="25"/>
    </location>
    <ligand>
        <name>phosphate</name>
        <dbReference type="ChEBI" id="CHEBI:43474"/>
        <note>ligand shared between dimeric partners</note>
    </ligand>
</feature>
<feature type="binding site" evidence="1">
    <location>
        <position position="44"/>
    </location>
    <ligand>
        <name>phosphate</name>
        <dbReference type="ChEBI" id="CHEBI:43474"/>
        <note>ligand shared between dimeric partners</note>
    </ligand>
</feature>
<feature type="binding site" description="in other chain" evidence="1">
    <location>
        <begin position="88"/>
        <end position="91"/>
    </location>
    <ligand>
        <name>phosphate</name>
        <dbReference type="ChEBI" id="CHEBI:43474"/>
        <note>ligand shared between dimeric partners</note>
    </ligand>
</feature>
<feature type="binding site" description="in other chain" evidence="1">
    <location>
        <begin position="180"/>
        <end position="182"/>
    </location>
    <ligand>
        <name>a purine D-ribonucleoside</name>
        <dbReference type="ChEBI" id="CHEBI:142355"/>
        <note>ligand shared between dimeric partners</note>
    </ligand>
</feature>
<feature type="binding site" description="in other chain" evidence="1">
    <location>
        <begin position="204"/>
        <end position="205"/>
    </location>
    <ligand>
        <name>a purine D-ribonucleoside</name>
        <dbReference type="ChEBI" id="CHEBI:142355"/>
        <note>ligand shared between dimeric partners</note>
    </ligand>
</feature>
<feature type="site" description="Important for catalytic activity" evidence="2">
    <location>
        <position position="218"/>
    </location>
</feature>
<feature type="modified residue" description="N6-acetyllysine" evidence="2">
    <location>
        <position position="27"/>
    </location>
</feature>
<accession>B1IS35</accession>
<comment type="function">
    <text evidence="2">Catalyzes the reversible phosphorolytic breakdown of the N-glycosidic bond in the beta-(deoxy)ribonucleoside molecules, with the formation of the corresponding free purine bases and pentose-1-phosphate.</text>
</comment>
<comment type="catalytic activity">
    <reaction evidence="2">
        <text>a purine D-ribonucleoside + phosphate = a purine nucleobase + alpha-D-ribose 1-phosphate</text>
        <dbReference type="Rhea" id="RHEA:19805"/>
        <dbReference type="ChEBI" id="CHEBI:26386"/>
        <dbReference type="ChEBI" id="CHEBI:43474"/>
        <dbReference type="ChEBI" id="CHEBI:57720"/>
        <dbReference type="ChEBI" id="CHEBI:142355"/>
        <dbReference type="EC" id="2.4.2.1"/>
    </reaction>
</comment>
<comment type="catalytic activity">
    <reaction evidence="2">
        <text>a purine 2'-deoxy-D-ribonucleoside + phosphate = a purine nucleobase + 2-deoxy-alpha-D-ribose 1-phosphate</text>
        <dbReference type="Rhea" id="RHEA:36431"/>
        <dbReference type="ChEBI" id="CHEBI:26386"/>
        <dbReference type="ChEBI" id="CHEBI:43474"/>
        <dbReference type="ChEBI" id="CHEBI:57259"/>
        <dbReference type="ChEBI" id="CHEBI:142361"/>
        <dbReference type="EC" id="2.4.2.1"/>
    </reaction>
</comment>
<comment type="subunit">
    <text evidence="2">Homohexamer; trimer of homodimers.</text>
</comment>
<comment type="similarity">
    <text evidence="2">Belongs to the PNP/UDP phosphorylase family.</text>
</comment>